<keyword id="KW-0030">Aminoacyl-tRNA synthetase</keyword>
<keyword id="KW-0067">ATP-binding</keyword>
<keyword id="KW-0963">Cytoplasm</keyword>
<keyword id="KW-0436">Ligase</keyword>
<keyword id="KW-0547">Nucleotide-binding</keyword>
<keyword id="KW-0648">Protein biosynthesis</keyword>
<keyword id="KW-1185">Reference proteome</keyword>
<comment type="function">
    <text evidence="1">Aspartyl-tRNA synthetase with relaxed tRNA specificity since it is able to aspartylate not only its cognate tRNA(Asp) but also tRNA(Asn). Reaction proceeds in two steps: L-aspartate is first activated by ATP to form Asp-AMP and then transferred to the acceptor end of tRNA(Asp/Asn).</text>
</comment>
<comment type="catalytic activity">
    <reaction evidence="1">
        <text>tRNA(Asx) + L-aspartate + ATP = L-aspartyl-tRNA(Asx) + AMP + diphosphate</text>
        <dbReference type="Rhea" id="RHEA:18349"/>
        <dbReference type="Rhea" id="RHEA-COMP:9710"/>
        <dbReference type="Rhea" id="RHEA-COMP:9711"/>
        <dbReference type="ChEBI" id="CHEBI:29991"/>
        <dbReference type="ChEBI" id="CHEBI:30616"/>
        <dbReference type="ChEBI" id="CHEBI:33019"/>
        <dbReference type="ChEBI" id="CHEBI:78442"/>
        <dbReference type="ChEBI" id="CHEBI:78516"/>
        <dbReference type="ChEBI" id="CHEBI:456215"/>
        <dbReference type="EC" id="6.1.1.23"/>
    </reaction>
</comment>
<comment type="subunit">
    <text evidence="1">Homodimer.</text>
</comment>
<comment type="subcellular location">
    <subcellularLocation>
        <location evidence="1">Cytoplasm</location>
    </subcellularLocation>
</comment>
<comment type="similarity">
    <text evidence="1">Belongs to the class-II aminoacyl-tRNA synthetase family. Type 1 subfamily.</text>
</comment>
<evidence type="ECO:0000255" key="1">
    <source>
        <dbReference type="HAMAP-Rule" id="MF_00044"/>
    </source>
</evidence>
<reference key="1">
    <citation type="journal article" date="2000" name="Science">
        <title>Complete genome sequence of Neisseria meningitidis serogroup B strain MC58.</title>
        <authorList>
            <person name="Tettelin H."/>
            <person name="Saunders N.J."/>
            <person name="Heidelberg J.F."/>
            <person name="Jeffries A.C."/>
            <person name="Nelson K.E."/>
            <person name="Eisen J.A."/>
            <person name="Ketchum K.A."/>
            <person name="Hood D.W."/>
            <person name="Peden J.F."/>
            <person name="Dodson R.J."/>
            <person name="Nelson W.C."/>
            <person name="Gwinn M.L."/>
            <person name="DeBoy R.T."/>
            <person name="Peterson J.D."/>
            <person name="Hickey E.K."/>
            <person name="Haft D.H."/>
            <person name="Salzberg S.L."/>
            <person name="White O."/>
            <person name="Fleischmann R.D."/>
            <person name="Dougherty B.A."/>
            <person name="Mason T.M."/>
            <person name="Ciecko A."/>
            <person name="Parksey D.S."/>
            <person name="Blair E."/>
            <person name="Cittone H."/>
            <person name="Clark E.B."/>
            <person name="Cotton M.D."/>
            <person name="Utterback T.R."/>
            <person name="Khouri H.M."/>
            <person name="Qin H."/>
            <person name="Vamathevan J.J."/>
            <person name="Gill J."/>
            <person name="Scarlato V."/>
            <person name="Masignani V."/>
            <person name="Pizza M."/>
            <person name="Grandi G."/>
            <person name="Sun L."/>
            <person name="Smith H.O."/>
            <person name="Fraser C.M."/>
            <person name="Moxon E.R."/>
            <person name="Rappuoli R."/>
            <person name="Venter J.C."/>
        </authorList>
    </citation>
    <scope>NUCLEOTIDE SEQUENCE [LARGE SCALE GENOMIC DNA]</scope>
    <source>
        <strain>ATCC BAA-335 / MC58</strain>
    </source>
</reference>
<gene>
    <name evidence="1" type="primary">aspS</name>
    <name type="ordered locus">NMB0466</name>
</gene>
<protein>
    <recommendedName>
        <fullName evidence="1">Aspartate--tRNA(Asp/Asn) ligase</fullName>
        <ecNumber evidence="1">6.1.1.23</ecNumber>
    </recommendedName>
    <alternativeName>
        <fullName evidence="1">Aspartyl-tRNA synthetase</fullName>
        <shortName evidence="1">AspRS</shortName>
    </alternativeName>
    <alternativeName>
        <fullName evidence="1">Non-discriminating aspartyl-tRNA synthetase</fullName>
        <shortName evidence="1">ND-AspRS</shortName>
    </alternativeName>
</protein>
<dbReference type="EC" id="6.1.1.23" evidence="1"/>
<dbReference type="EMBL" id="AE002098">
    <property type="protein sequence ID" value="AAF40903.1"/>
    <property type="molecule type" value="Genomic_DNA"/>
</dbReference>
<dbReference type="PIR" id="G81195">
    <property type="entry name" value="G81195"/>
</dbReference>
<dbReference type="RefSeq" id="NP_273513.1">
    <property type="nucleotide sequence ID" value="NC_003112.2"/>
</dbReference>
<dbReference type="RefSeq" id="WP_002224947.1">
    <property type="nucleotide sequence ID" value="NC_003112.2"/>
</dbReference>
<dbReference type="SMR" id="Q9K0U5"/>
<dbReference type="FunCoup" id="Q9K0U5">
    <property type="interactions" value="534"/>
</dbReference>
<dbReference type="STRING" id="122586.NMB0466"/>
<dbReference type="PaxDb" id="122586-NMB0466"/>
<dbReference type="KEGG" id="nme:NMB0466"/>
<dbReference type="PATRIC" id="fig|122586.8.peg.611"/>
<dbReference type="HOGENOM" id="CLU_014330_3_2_4"/>
<dbReference type="InParanoid" id="Q9K0U5"/>
<dbReference type="OrthoDB" id="9802326at2"/>
<dbReference type="Proteomes" id="UP000000425">
    <property type="component" value="Chromosome"/>
</dbReference>
<dbReference type="GO" id="GO:0005737">
    <property type="term" value="C:cytoplasm"/>
    <property type="evidence" value="ECO:0007669"/>
    <property type="project" value="UniProtKB-SubCell"/>
</dbReference>
<dbReference type="GO" id="GO:0004815">
    <property type="term" value="F:aspartate-tRNA ligase activity"/>
    <property type="evidence" value="ECO:0000318"/>
    <property type="project" value="GO_Central"/>
</dbReference>
<dbReference type="GO" id="GO:0050560">
    <property type="term" value="F:aspartate-tRNA(Asn) ligase activity"/>
    <property type="evidence" value="ECO:0007669"/>
    <property type="project" value="UniProtKB-EC"/>
</dbReference>
<dbReference type="GO" id="GO:0005524">
    <property type="term" value="F:ATP binding"/>
    <property type="evidence" value="ECO:0007669"/>
    <property type="project" value="UniProtKB-UniRule"/>
</dbReference>
<dbReference type="GO" id="GO:0003676">
    <property type="term" value="F:nucleic acid binding"/>
    <property type="evidence" value="ECO:0007669"/>
    <property type="project" value="InterPro"/>
</dbReference>
<dbReference type="GO" id="GO:0006422">
    <property type="term" value="P:aspartyl-tRNA aminoacylation"/>
    <property type="evidence" value="ECO:0000318"/>
    <property type="project" value="GO_Central"/>
</dbReference>
<dbReference type="CDD" id="cd00777">
    <property type="entry name" value="AspRS_core"/>
    <property type="match status" value="1"/>
</dbReference>
<dbReference type="CDD" id="cd04317">
    <property type="entry name" value="EcAspRS_like_N"/>
    <property type="match status" value="1"/>
</dbReference>
<dbReference type="Gene3D" id="3.30.930.10">
    <property type="entry name" value="Bira Bifunctional Protein, Domain 2"/>
    <property type="match status" value="1"/>
</dbReference>
<dbReference type="Gene3D" id="3.30.1360.30">
    <property type="entry name" value="GAD-like domain"/>
    <property type="match status" value="1"/>
</dbReference>
<dbReference type="Gene3D" id="2.40.50.140">
    <property type="entry name" value="Nucleic acid-binding proteins"/>
    <property type="match status" value="1"/>
</dbReference>
<dbReference type="HAMAP" id="MF_00044">
    <property type="entry name" value="Asp_tRNA_synth_type1"/>
    <property type="match status" value="1"/>
</dbReference>
<dbReference type="InterPro" id="IPR004364">
    <property type="entry name" value="Aa-tRNA-synt_II"/>
</dbReference>
<dbReference type="InterPro" id="IPR006195">
    <property type="entry name" value="aa-tRNA-synth_II"/>
</dbReference>
<dbReference type="InterPro" id="IPR045864">
    <property type="entry name" value="aa-tRNA-synth_II/BPL/LPL"/>
</dbReference>
<dbReference type="InterPro" id="IPR004524">
    <property type="entry name" value="Asp-tRNA-ligase_1"/>
</dbReference>
<dbReference type="InterPro" id="IPR047089">
    <property type="entry name" value="Asp-tRNA-ligase_1_N"/>
</dbReference>
<dbReference type="InterPro" id="IPR002312">
    <property type="entry name" value="Asp/Asn-tRNA-synth_IIb"/>
</dbReference>
<dbReference type="InterPro" id="IPR047090">
    <property type="entry name" value="AspRS_core"/>
</dbReference>
<dbReference type="InterPro" id="IPR004115">
    <property type="entry name" value="GAD-like_sf"/>
</dbReference>
<dbReference type="InterPro" id="IPR029351">
    <property type="entry name" value="GAD_dom"/>
</dbReference>
<dbReference type="InterPro" id="IPR012340">
    <property type="entry name" value="NA-bd_OB-fold"/>
</dbReference>
<dbReference type="InterPro" id="IPR004365">
    <property type="entry name" value="NA-bd_OB_tRNA"/>
</dbReference>
<dbReference type="NCBIfam" id="TIGR00459">
    <property type="entry name" value="aspS_bact"/>
    <property type="match status" value="1"/>
</dbReference>
<dbReference type="NCBIfam" id="NF001750">
    <property type="entry name" value="PRK00476.1"/>
    <property type="match status" value="1"/>
</dbReference>
<dbReference type="PANTHER" id="PTHR22594:SF5">
    <property type="entry name" value="ASPARTATE--TRNA LIGASE, MITOCHONDRIAL"/>
    <property type="match status" value="1"/>
</dbReference>
<dbReference type="PANTHER" id="PTHR22594">
    <property type="entry name" value="ASPARTYL/LYSYL-TRNA SYNTHETASE"/>
    <property type="match status" value="1"/>
</dbReference>
<dbReference type="Pfam" id="PF02938">
    <property type="entry name" value="GAD"/>
    <property type="match status" value="1"/>
</dbReference>
<dbReference type="Pfam" id="PF00152">
    <property type="entry name" value="tRNA-synt_2"/>
    <property type="match status" value="1"/>
</dbReference>
<dbReference type="Pfam" id="PF01336">
    <property type="entry name" value="tRNA_anti-codon"/>
    <property type="match status" value="1"/>
</dbReference>
<dbReference type="PRINTS" id="PR01042">
    <property type="entry name" value="TRNASYNTHASP"/>
</dbReference>
<dbReference type="SUPFAM" id="SSF55681">
    <property type="entry name" value="Class II aaRS and biotin synthetases"/>
    <property type="match status" value="1"/>
</dbReference>
<dbReference type="SUPFAM" id="SSF55261">
    <property type="entry name" value="GAD domain-like"/>
    <property type="match status" value="1"/>
</dbReference>
<dbReference type="SUPFAM" id="SSF50249">
    <property type="entry name" value="Nucleic acid-binding proteins"/>
    <property type="match status" value="1"/>
</dbReference>
<dbReference type="PROSITE" id="PS50862">
    <property type="entry name" value="AA_TRNA_LIGASE_II"/>
    <property type="match status" value="1"/>
</dbReference>
<name>SYDND_NEIMB</name>
<proteinExistence type="inferred from homology"/>
<accession>Q9K0U5</accession>
<organism>
    <name type="scientific">Neisseria meningitidis serogroup B (strain ATCC BAA-335 / MC58)</name>
    <dbReference type="NCBI Taxonomy" id="122586"/>
    <lineage>
        <taxon>Bacteria</taxon>
        <taxon>Pseudomonadati</taxon>
        <taxon>Pseudomonadota</taxon>
        <taxon>Betaproteobacteria</taxon>
        <taxon>Neisseriales</taxon>
        <taxon>Neisseriaceae</taxon>
        <taxon>Neisseria</taxon>
    </lineage>
</organism>
<feature type="chain" id="PRO_0000110910" description="Aspartate--tRNA(Asp/Asn) ligase">
    <location>
        <begin position="1"/>
        <end position="602"/>
    </location>
</feature>
<feature type="region of interest" description="Aspartate" evidence="1">
    <location>
        <begin position="196"/>
        <end position="199"/>
    </location>
</feature>
<feature type="binding site" evidence="1">
    <location>
        <position position="172"/>
    </location>
    <ligand>
        <name>L-aspartate</name>
        <dbReference type="ChEBI" id="CHEBI:29991"/>
    </ligand>
</feature>
<feature type="binding site" evidence="1">
    <location>
        <begin position="218"/>
        <end position="220"/>
    </location>
    <ligand>
        <name>ATP</name>
        <dbReference type="ChEBI" id="CHEBI:30616"/>
    </ligand>
</feature>
<feature type="binding site" evidence="1">
    <location>
        <position position="218"/>
    </location>
    <ligand>
        <name>L-aspartate</name>
        <dbReference type="ChEBI" id="CHEBI:29991"/>
    </ligand>
</feature>
<feature type="binding site" evidence="1">
    <location>
        <position position="227"/>
    </location>
    <ligand>
        <name>ATP</name>
        <dbReference type="ChEBI" id="CHEBI:30616"/>
    </ligand>
</feature>
<feature type="binding site" evidence="1">
    <location>
        <position position="457"/>
    </location>
    <ligand>
        <name>L-aspartate</name>
        <dbReference type="ChEBI" id="CHEBI:29991"/>
    </ligand>
</feature>
<feature type="binding site" evidence="1">
    <location>
        <position position="491"/>
    </location>
    <ligand>
        <name>ATP</name>
        <dbReference type="ChEBI" id="CHEBI:30616"/>
    </ligand>
</feature>
<feature type="binding site" evidence="1">
    <location>
        <position position="498"/>
    </location>
    <ligand>
        <name>L-aspartate</name>
        <dbReference type="ChEBI" id="CHEBI:29991"/>
    </ligand>
</feature>
<feature type="binding site" evidence="1">
    <location>
        <begin position="543"/>
        <end position="546"/>
    </location>
    <ligand>
        <name>ATP</name>
        <dbReference type="ChEBI" id="CHEBI:30616"/>
    </ligand>
</feature>
<feature type="site" description="Important for tRNA non-discrimination" evidence="1">
    <location>
        <position position="30"/>
    </location>
</feature>
<feature type="site" description="Important for tRNA non-discrimination" evidence="1">
    <location>
        <position position="81"/>
    </location>
</feature>
<sequence length="602" mass="68124">MRTNYCGLISEQYLDQTVTVKGWVHRRRDHGGVIFIDLRDREGIVQVVIDPDTPEAFAAADSSRNEYVLSITGRVRNRPEGTTNDKMISGKIEILAKEIEVLNAAATPPFQIDDENISENVRLTNRVIDLRRPVMQRNLRLRYQVAMGVRRYLDAQGFIDIETPMLTRSTPEGARDYLVPSRVHPGEFFALPQSPQLFKQLLMVAGFDRYYQITKCFRDEDLRADRQPEFTQIDLETSFLNEDEIMDITEGMAKQVFKDALNVDLGDFPRMPYSEAMFYYGSDKPDMRINLKFTELTDLMKTEEFKVFRGAADMKGGRVVALRVPNGAEFSRKEIDEYTKFVGIYGAKGLAYIKVNDVSNLSNGEDSGLQSPIVKYLSENALKEIIARTGAQNGDIIFFGADKAKVVNEAIGALRIKVGLEHGKDNGYFTDEWKPLWVVDFPMFEYDEEADRYVAVHHPFTAPKEGHEDLMVSDPANCLARAYDMVLNGWEIGGGSIRIHRADVQEKVFAALKISPEEQQEKFGFLLDNLKFGAPPHGGLAFGLDRLVTLMTGAESIRDVIAFPKTQRAQCLLTNAPNSVDDKQLRELSLRLRQKATETKEV</sequence>